<feature type="chain" id="PRO_1000187919" description="Tyrosine recombinase XerS">
    <location>
        <begin position="1"/>
        <end position="356"/>
    </location>
</feature>
<feature type="domain" description="Core-binding (CB)" evidence="3">
    <location>
        <begin position="16"/>
        <end position="121"/>
    </location>
</feature>
<feature type="domain" description="Tyr recombinase" evidence="2">
    <location>
        <begin position="169"/>
        <end position="354"/>
    </location>
</feature>
<feature type="active site" evidence="1">
    <location>
        <position position="210"/>
    </location>
</feature>
<feature type="active site" evidence="1">
    <location>
        <position position="234"/>
    </location>
</feature>
<feature type="active site" evidence="1">
    <location>
        <position position="306"/>
    </location>
</feature>
<feature type="active site" evidence="1">
    <location>
        <position position="309"/>
    </location>
</feature>
<feature type="active site" evidence="1">
    <location>
        <position position="332"/>
    </location>
</feature>
<feature type="active site" description="O-(3'-phospho-DNA)-tyrosine intermediate" evidence="1">
    <location>
        <position position="341"/>
    </location>
</feature>
<keyword id="KW-0131">Cell cycle</keyword>
<keyword id="KW-0132">Cell division</keyword>
<keyword id="KW-0159">Chromosome partition</keyword>
<keyword id="KW-0963">Cytoplasm</keyword>
<keyword id="KW-0229">DNA integration</keyword>
<keyword id="KW-0233">DNA recombination</keyword>
<keyword id="KW-0238">DNA-binding</keyword>
<sequence length="356" mass="41113">MKREILLERIDKLKQLMPWYVLEYYQSKLAVPYSFTTLYEYLKEYDRFFSWVLESGISNADKISDIPLSVLENMSKKDMESFILYLRERPLLNANTTKQGVSQTTINRTLSALSSLYKYLTEEVENDQGEPYFYRNVMKKVSTKKKKETLAARAENIKQKLFLGDETAGFLTYIDQEHPQQLSNRALSSFNKNKERDLAIIALLLASGVRLSEAVNLDLRDLNLKMMVIDVTRKGGKRDSVNVAAFAKPYLENYLAIRNQRYKTEKTDTALFLTLYRGVPNRIDASSVEKMVAKYSEDFKVRVTPHKLRHTLATRLYDATKSQVLVSHQLGHASTQVTDLYTHIVNDEQKNALDSL</sequence>
<organism>
    <name type="scientific">Streptococcus pneumoniae (strain P1031)</name>
    <dbReference type="NCBI Taxonomy" id="488223"/>
    <lineage>
        <taxon>Bacteria</taxon>
        <taxon>Bacillati</taxon>
        <taxon>Bacillota</taxon>
        <taxon>Bacilli</taxon>
        <taxon>Lactobacillales</taxon>
        <taxon>Streptococcaceae</taxon>
        <taxon>Streptococcus</taxon>
    </lineage>
</organism>
<reference key="1">
    <citation type="journal article" date="2010" name="Genome Biol.">
        <title>Structure and dynamics of the pan-genome of Streptococcus pneumoniae and closely related species.</title>
        <authorList>
            <person name="Donati C."/>
            <person name="Hiller N.L."/>
            <person name="Tettelin H."/>
            <person name="Muzzi A."/>
            <person name="Croucher N.J."/>
            <person name="Angiuoli S.V."/>
            <person name="Oggioni M."/>
            <person name="Dunning Hotopp J.C."/>
            <person name="Hu F.Z."/>
            <person name="Riley D.R."/>
            <person name="Covacci A."/>
            <person name="Mitchell T.J."/>
            <person name="Bentley S.D."/>
            <person name="Kilian M."/>
            <person name="Ehrlich G.D."/>
            <person name="Rappuoli R."/>
            <person name="Moxon E.R."/>
            <person name="Masignani V."/>
        </authorList>
    </citation>
    <scope>NUCLEOTIDE SEQUENCE [LARGE SCALE GENOMIC DNA]</scope>
    <source>
        <strain>P1031</strain>
    </source>
</reference>
<protein>
    <recommendedName>
        <fullName evidence="1">Tyrosine recombinase XerS</fullName>
    </recommendedName>
</protein>
<proteinExistence type="inferred from homology"/>
<evidence type="ECO:0000255" key="1">
    <source>
        <dbReference type="HAMAP-Rule" id="MF_01816"/>
    </source>
</evidence>
<evidence type="ECO:0000255" key="2">
    <source>
        <dbReference type="PROSITE-ProRule" id="PRU01246"/>
    </source>
</evidence>
<evidence type="ECO:0000255" key="3">
    <source>
        <dbReference type="PROSITE-ProRule" id="PRU01248"/>
    </source>
</evidence>
<name>XERS_STRZP</name>
<dbReference type="EMBL" id="CP000920">
    <property type="protein sequence ID" value="ACO20799.1"/>
    <property type="molecule type" value="Genomic_DNA"/>
</dbReference>
<dbReference type="RefSeq" id="WP_000817878.1">
    <property type="nucleotide sequence ID" value="NC_012467.1"/>
</dbReference>
<dbReference type="SMR" id="C1CKQ9"/>
<dbReference type="GeneID" id="45653556"/>
<dbReference type="KEGG" id="spp:SPP_1202"/>
<dbReference type="HOGENOM" id="CLU_027562_9_6_9"/>
<dbReference type="GO" id="GO:0005737">
    <property type="term" value="C:cytoplasm"/>
    <property type="evidence" value="ECO:0007669"/>
    <property type="project" value="UniProtKB-SubCell"/>
</dbReference>
<dbReference type="GO" id="GO:0003677">
    <property type="term" value="F:DNA binding"/>
    <property type="evidence" value="ECO:0007669"/>
    <property type="project" value="UniProtKB-KW"/>
</dbReference>
<dbReference type="GO" id="GO:0009037">
    <property type="term" value="F:tyrosine-based site-specific recombinase activity"/>
    <property type="evidence" value="ECO:0007669"/>
    <property type="project" value="UniProtKB-UniRule"/>
</dbReference>
<dbReference type="GO" id="GO:0051301">
    <property type="term" value="P:cell division"/>
    <property type="evidence" value="ECO:0007669"/>
    <property type="project" value="UniProtKB-KW"/>
</dbReference>
<dbReference type="GO" id="GO:0007059">
    <property type="term" value="P:chromosome segregation"/>
    <property type="evidence" value="ECO:0007669"/>
    <property type="project" value="UniProtKB-UniRule"/>
</dbReference>
<dbReference type="GO" id="GO:0006310">
    <property type="term" value="P:DNA recombination"/>
    <property type="evidence" value="ECO:0007669"/>
    <property type="project" value="UniProtKB-UniRule"/>
</dbReference>
<dbReference type="Gene3D" id="1.10.150.130">
    <property type="match status" value="1"/>
</dbReference>
<dbReference type="Gene3D" id="1.10.443.10">
    <property type="entry name" value="Intergrase catalytic core"/>
    <property type="match status" value="1"/>
</dbReference>
<dbReference type="HAMAP" id="MF_01816">
    <property type="entry name" value="Recomb_XerS"/>
    <property type="match status" value="1"/>
</dbReference>
<dbReference type="InterPro" id="IPR044068">
    <property type="entry name" value="CB"/>
</dbReference>
<dbReference type="InterPro" id="IPR011010">
    <property type="entry name" value="DNA_brk_join_enz"/>
</dbReference>
<dbReference type="InterPro" id="IPR013762">
    <property type="entry name" value="Integrase-like_cat_sf"/>
</dbReference>
<dbReference type="InterPro" id="IPR002104">
    <property type="entry name" value="Integrase_catalytic"/>
</dbReference>
<dbReference type="InterPro" id="IPR010998">
    <property type="entry name" value="Integrase_recombinase_N"/>
</dbReference>
<dbReference type="InterPro" id="IPR004107">
    <property type="entry name" value="Integrase_SAM-like_N"/>
</dbReference>
<dbReference type="InterPro" id="IPR023670">
    <property type="entry name" value="Recomb_XerS"/>
</dbReference>
<dbReference type="InterPro" id="IPR050090">
    <property type="entry name" value="Tyrosine_recombinase_XerCD"/>
</dbReference>
<dbReference type="NCBIfam" id="NF003462">
    <property type="entry name" value="PRK05084.1"/>
    <property type="match status" value="1"/>
</dbReference>
<dbReference type="PANTHER" id="PTHR30349">
    <property type="entry name" value="PHAGE INTEGRASE-RELATED"/>
    <property type="match status" value="1"/>
</dbReference>
<dbReference type="PANTHER" id="PTHR30349:SF77">
    <property type="entry name" value="TYROSINE RECOMBINASE XERC"/>
    <property type="match status" value="1"/>
</dbReference>
<dbReference type="Pfam" id="PF02899">
    <property type="entry name" value="Phage_int_SAM_1"/>
    <property type="match status" value="1"/>
</dbReference>
<dbReference type="Pfam" id="PF00589">
    <property type="entry name" value="Phage_integrase"/>
    <property type="match status" value="1"/>
</dbReference>
<dbReference type="SUPFAM" id="SSF56349">
    <property type="entry name" value="DNA breaking-rejoining enzymes"/>
    <property type="match status" value="1"/>
</dbReference>
<dbReference type="PROSITE" id="PS51900">
    <property type="entry name" value="CB"/>
    <property type="match status" value="1"/>
</dbReference>
<dbReference type="PROSITE" id="PS51898">
    <property type="entry name" value="TYR_RECOMBINASE"/>
    <property type="match status" value="1"/>
</dbReference>
<comment type="function">
    <text evidence="1">Site-specific tyrosine recombinase, which acts by catalyzing the cutting and rejoining of the recombining DNA molecules. Essential to convert dimers of the bacterial chromosome into monomers to permit their segregation at cell division.</text>
</comment>
<comment type="activity regulation">
    <text evidence="1">FtsK is required for recombination.</text>
</comment>
<comment type="subcellular location">
    <subcellularLocation>
        <location evidence="1">Cytoplasm</location>
    </subcellularLocation>
</comment>
<comment type="similarity">
    <text evidence="1">Belongs to the 'phage' integrase family. XerS subfamily.</text>
</comment>
<gene>
    <name evidence="1" type="primary">xerS</name>
    <name type="ordered locus">SPP_1202</name>
</gene>
<accession>C1CKQ9</accession>